<organism>
    <name type="scientific">Escherichia coli O127:H6 (strain E2348/69 / EPEC)</name>
    <dbReference type="NCBI Taxonomy" id="574521"/>
    <lineage>
        <taxon>Bacteria</taxon>
        <taxon>Pseudomonadati</taxon>
        <taxon>Pseudomonadota</taxon>
        <taxon>Gammaproteobacteria</taxon>
        <taxon>Enterobacterales</taxon>
        <taxon>Enterobacteriaceae</taxon>
        <taxon>Escherichia</taxon>
    </lineage>
</organism>
<gene>
    <name evidence="1" type="primary">hisA</name>
    <name type="ordered locus">E2348C_2165</name>
</gene>
<name>HIS4_ECO27</name>
<feature type="chain" id="PRO_1000148970" description="1-(5-phosphoribosyl)-5-[(5-phosphoribosylamino)methylideneamino] imidazole-4-carboxamide isomerase">
    <location>
        <begin position="1"/>
        <end position="245"/>
    </location>
</feature>
<feature type="active site" description="Proton acceptor" evidence="1">
    <location>
        <position position="7"/>
    </location>
</feature>
<feature type="active site" description="Proton donor" evidence="1">
    <location>
        <position position="129"/>
    </location>
</feature>
<keyword id="KW-0028">Amino-acid biosynthesis</keyword>
<keyword id="KW-0963">Cytoplasm</keyword>
<keyword id="KW-0368">Histidine biosynthesis</keyword>
<keyword id="KW-0413">Isomerase</keyword>
<keyword id="KW-1185">Reference proteome</keyword>
<sequence>MIIPALDLIDGTVVRLHQGDYGKQRDYGNDPLPRLQDYAAQGAEVLHLVDLTGAKDPAKRQIPLIKTLVAGVNVPVQVGGGVRSEEDVATLLEAGVARVVVGSTAVKSPEMVKGWFERFGADALVLALDVRIDEQGNKQVAVSGWQENSGVSLEQLVETYLPVGLKHVLCTDISRDGTLAGSNVSLYEEVCARYPQVAFQSSGGIGDINDVAALRGTGVRGVIVGRALLEGKFTVKEAIACWQNA</sequence>
<dbReference type="EC" id="5.3.1.16" evidence="1"/>
<dbReference type="EMBL" id="FM180568">
    <property type="protein sequence ID" value="CAS09713.1"/>
    <property type="molecule type" value="Genomic_DNA"/>
</dbReference>
<dbReference type="RefSeq" id="WP_000586465.1">
    <property type="nucleotide sequence ID" value="NC_011601.1"/>
</dbReference>
<dbReference type="SMR" id="B7UT61"/>
<dbReference type="KEGG" id="ecg:E2348C_2165"/>
<dbReference type="HOGENOM" id="CLU_048577_1_2_6"/>
<dbReference type="UniPathway" id="UPA00031">
    <property type="reaction ID" value="UER00009"/>
</dbReference>
<dbReference type="Proteomes" id="UP000008205">
    <property type="component" value="Chromosome"/>
</dbReference>
<dbReference type="GO" id="GO:0005737">
    <property type="term" value="C:cytoplasm"/>
    <property type="evidence" value="ECO:0007669"/>
    <property type="project" value="UniProtKB-SubCell"/>
</dbReference>
<dbReference type="GO" id="GO:0003949">
    <property type="term" value="F:1-(5-phosphoribosyl)-5-[(5-phosphoribosylamino)methylideneamino]imidazole-4-carboxamide isomerase activity"/>
    <property type="evidence" value="ECO:0007669"/>
    <property type="project" value="UniProtKB-UniRule"/>
</dbReference>
<dbReference type="GO" id="GO:0000105">
    <property type="term" value="P:L-histidine biosynthetic process"/>
    <property type="evidence" value="ECO:0007669"/>
    <property type="project" value="UniProtKB-UniRule"/>
</dbReference>
<dbReference type="GO" id="GO:0000162">
    <property type="term" value="P:L-tryptophan biosynthetic process"/>
    <property type="evidence" value="ECO:0007669"/>
    <property type="project" value="TreeGrafter"/>
</dbReference>
<dbReference type="CDD" id="cd04732">
    <property type="entry name" value="HisA"/>
    <property type="match status" value="1"/>
</dbReference>
<dbReference type="FunFam" id="3.20.20.70:FF:000009">
    <property type="entry name" value="1-(5-phosphoribosyl)-5-[(5-phosphoribosylamino)methylideneamino] imidazole-4-carboxamide isomerase"/>
    <property type="match status" value="1"/>
</dbReference>
<dbReference type="Gene3D" id="3.20.20.70">
    <property type="entry name" value="Aldolase class I"/>
    <property type="match status" value="1"/>
</dbReference>
<dbReference type="HAMAP" id="MF_01014">
    <property type="entry name" value="HisA"/>
    <property type="match status" value="1"/>
</dbReference>
<dbReference type="InterPro" id="IPR013785">
    <property type="entry name" value="Aldolase_TIM"/>
</dbReference>
<dbReference type="InterPro" id="IPR006062">
    <property type="entry name" value="His_biosynth"/>
</dbReference>
<dbReference type="InterPro" id="IPR006063">
    <property type="entry name" value="HisA_bact_arch"/>
</dbReference>
<dbReference type="InterPro" id="IPR044524">
    <property type="entry name" value="Isoase_HisA-like"/>
</dbReference>
<dbReference type="InterPro" id="IPR023016">
    <property type="entry name" value="Isoase_HisA-like_bact"/>
</dbReference>
<dbReference type="InterPro" id="IPR011060">
    <property type="entry name" value="RibuloseP-bd_barrel"/>
</dbReference>
<dbReference type="NCBIfam" id="TIGR00007">
    <property type="entry name" value="1-(5-phosphoribosyl)-5-[(5-phosphoribosylamino)methylideneamino]imidazole-4-carboxamide isomerase"/>
    <property type="match status" value="1"/>
</dbReference>
<dbReference type="PANTHER" id="PTHR43090">
    <property type="entry name" value="1-(5-PHOSPHORIBOSYL)-5-[(5-PHOSPHORIBOSYLAMINO)METHYLIDENEAMINO] IMIDAZOLE-4-CARBOXAMIDE ISOMERASE"/>
    <property type="match status" value="1"/>
</dbReference>
<dbReference type="PANTHER" id="PTHR43090:SF2">
    <property type="entry name" value="1-(5-PHOSPHORIBOSYL)-5-[(5-PHOSPHORIBOSYLAMINO)METHYLIDENEAMINO] IMIDAZOLE-4-CARBOXAMIDE ISOMERASE"/>
    <property type="match status" value="1"/>
</dbReference>
<dbReference type="Pfam" id="PF00977">
    <property type="entry name" value="His_biosynth"/>
    <property type="match status" value="1"/>
</dbReference>
<dbReference type="SUPFAM" id="SSF51366">
    <property type="entry name" value="Ribulose-phoshate binding barrel"/>
    <property type="match status" value="1"/>
</dbReference>
<proteinExistence type="inferred from homology"/>
<accession>B7UT61</accession>
<reference key="1">
    <citation type="journal article" date="2009" name="J. Bacteriol.">
        <title>Complete genome sequence and comparative genome analysis of enteropathogenic Escherichia coli O127:H6 strain E2348/69.</title>
        <authorList>
            <person name="Iguchi A."/>
            <person name="Thomson N.R."/>
            <person name="Ogura Y."/>
            <person name="Saunders D."/>
            <person name="Ooka T."/>
            <person name="Henderson I.R."/>
            <person name="Harris D."/>
            <person name="Asadulghani M."/>
            <person name="Kurokawa K."/>
            <person name="Dean P."/>
            <person name="Kenny B."/>
            <person name="Quail M.A."/>
            <person name="Thurston S."/>
            <person name="Dougan G."/>
            <person name="Hayashi T."/>
            <person name="Parkhill J."/>
            <person name="Frankel G."/>
        </authorList>
    </citation>
    <scope>NUCLEOTIDE SEQUENCE [LARGE SCALE GENOMIC DNA]</scope>
    <source>
        <strain>E2348/69 / EPEC</strain>
    </source>
</reference>
<comment type="catalytic activity">
    <reaction evidence="1">
        <text>1-(5-phospho-beta-D-ribosyl)-5-[(5-phospho-beta-D-ribosylamino)methylideneamino]imidazole-4-carboxamide = 5-[(5-phospho-1-deoxy-D-ribulos-1-ylimino)methylamino]-1-(5-phospho-beta-D-ribosyl)imidazole-4-carboxamide</text>
        <dbReference type="Rhea" id="RHEA:15469"/>
        <dbReference type="ChEBI" id="CHEBI:58435"/>
        <dbReference type="ChEBI" id="CHEBI:58525"/>
        <dbReference type="EC" id="5.3.1.16"/>
    </reaction>
</comment>
<comment type="pathway">
    <text evidence="1">Amino-acid biosynthesis; L-histidine biosynthesis; L-histidine from 5-phospho-alpha-D-ribose 1-diphosphate: step 4/9.</text>
</comment>
<comment type="subcellular location">
    <subcellularLocation>
        <location evidence="1">Cytoplasm</location>
    </subcellularLocation>
</comment>
<comment type="similarity">
    <text evidence="1">Belongs to the HisA/HisF family.</text>
</comment>
<protein>
    <recommendedName>
        <fullName evidence="1">1-(5-phosphoribosyl)-5-[(5-phosphoribosylamino)methylideneamino] imidazole-4-carboxamide isomerase</fullName>
        <ecNumber evidence="1">5.3.1.16</ecNumber>
    </recommendedName>
    <alternativeName>
        <fullName evidence="1">Phosphoribosylformimino-5-aminoimidazole carboxamide ribotide isomerase</fullName>
    </alternativeName>
</protein>
<evidence type="ECO:0000255" key="1">
    <source>
        <dbReference type="HAMAP-Rule" id="MF_01014"/>
    </source>
</evidence>